<protein>
    <recommendedName>
        <fullName evidence="1">Dihydroorotase</fullName>
        <shortName evidence="1">DHOase</shortName>
        <ecNumber evidence="1">3.5.2.3</ecNumber>
    </recommendedName>
</protein>
<organism>
    <name type="scientific">Buchnera aphidicola subsp. Acyrthosiphon pisum (strain APS)</name>
    <name type="common">Acyrthosiphon pisum symbiotic bacterium</name>
    <dbReference type="NCBI Taxonomy" id="107806"/>
    <lineage>
        <taxon>Bacteria</taxon>
        <taxon>Pseudomonadati</taxon>
        <taxon>Pseudomonadota</taxon>
        <taxon>Gammaproteobacteria</taxon>
        <taxon>Enterobacterales</taxon>
        <taxon>Erwiniaceae</taxon>
        <taxon>Buchnera</taxon>
    </lineage>
</organism>
<feature type="chain" id="PRO_0000147203" description="Dihydroorotase">
    <location>
        <begin position="1"/>
        <end position="350"/>
    </location>
</feature>
<feature type="active site" evidence="1">
    <location>
        <position position="252"/>
    </location>
</feature>
<feature type="binding site" evidence="1">
    <location>
        <position position="17"/>
    </location>
    <ligand>
        <name>Zn(2+)</name>
        <dbReference type="ChEBI" id="CHEBI:29105"/>
        <label>1</label>
    </ligand>
</feature>
<feature type="binding site" evidence="1">
    <location>
        <begin position="19"/>
        <end position="21"/>
    </location>
    <ligand>
        <name>substrate</name>
    </ligand>
</feature>
<feature type="binding site" evidence="1">
    <location>
        <position position="19"/>
    </location>
    <ligand>
        <name>Zn(2+)</name>
        <dbReference type="ChEBI" id="CHEBI:29105"/>
        <label>1</label>
    </ligand>
</feature>
<feature type="binding site" evidence="1">
    <location>
        <position position="45"/>
    </location>
    <ligand>
        <name>substrate</name>
    </ligand>
</feature>
<feature type="binding site" description="via carbamate group" evidence="1">
    <location>
        <position position="103"/>
    </location>
    <ligand>
        <name>Zn(2+)</name>
        <dbReference type="ChEBI" id="CHEBI:29105"/>
        <label>1</label>
    </ligand>
</feature>
<feature type="binding site" description="via carbamate group" evidence="1">
    <location>
        <position position="103"/>
    </location>
    <ligand>
        <name>Zn(2+)</name>
        <dbReference type="ChEBI" id="CHEBI:29105"/>
        <label>2</label>
    </ligand>
</feature>
<feature type="binding site" evidence="1">
    <location>
        <position position="140"/>
    </location>
    <ligand>
        <name>substrate</name>
    </ligand>
</feature>
<feature type="binding site" evidence="1">
    <location>
        <position position="140"/>
    </location>
    <ligand>
        <name>Zn(2+)</name>
        <dbReference type="ChEBI" id="CHEBI:29105"/>
        <label>2</label>
    </ligand>
</feature>
<feature type="binding site" evidence="1">
    <location>
        <position position="178"/>
    </location>
    <ligand>
        <name>Zn(2+)</name>
        <dbReference type="ChEBI" id="CHEBI:29105"/>
        <label>2</label>
    </ligand>
</feature>
<feature type="binding site" evidence="1">
    <location>
        <position position="224"/>
    </location>
    <ligand>
        <name>substrate</name>
    </ligand>
</feature>
<feature type="binding site" evidence="1">
    <location>
        <position position="252"/>
    </location>
    <ligand>
        <name>Zn(2+)</name>
        <dbReference type="ChEBI" id="CHEBI:29105"/>
        <label>1</label>
    </ligand>
</feature>
<feature type="binding site" evidence="1">
    <location>
        <position position="256"/>
    </location>
    <ligand>
        <name>substrate</name>
    </ligand>
</feature>
<feature type="binding site" evidence="1">
    <location>
        <position position="268"/>
    </location>
    <ligand>
        <name>substrate</name>
    </ligand>
</feature>
<feature type="modified residue" description="N6-carboxylysine" evidence="1">
    <location>
        <position position="103"/>
    </location>
</feature>
<comment type="function">
    <text evidence="1">Catalyzes the reversible cyclization of carbamoyl aspartate to dihydroorotate.</text>
</comment>
<comment type="catalytic activity">
    <reaction evidence="1">
        <text>(S)-dihydroorotate + H2O = N-carbamoyl-L-aspartate + H(+)</text>
        <dbReference type="Rhea" id="RHEA:24296"/>
        <dbReference type="ChEBI" id="CHEBI:15377"/>
        <dbReference type="ChEBI" id="CHEBI:15378"/>
        <dbReference type="ChEBI" id="CHEBI:30864"/>
        <dbReference type="ChEBI" id="CHEBI:32814"/>
        <dbReference type="EC" id="3.5.2.3"/>
    </reaction>
</comment>
<comment type="cofactor">
    <cofactor evidence="1">
        <name>Zn(2+)</name>
        <dbReference type="ChEBI" id="CHEBI:29105"/>
    </cofactor>
    <text evidence="1">Binds 2 Zn(2+) ions per subunit.</text>
</comment>
<comment type="pathway">
    <text evidence="1">Pyrimidine metabolism; UMP biosynthesis via de novo pathway; (S)-dihydroorotate from bicarbonate: step 3/3.</text>
</comment>
<comment type="subunit">
    <text evidence="1">Homodimer.</text>
</comment>
<comment type="similarity">
    <text evidence="1">Belongs to the metallo-dependent hydrolases superfamily. DHOase family. Class II DHOase subfamily.</text>
</comment>
<reference key="1">
    <citation type="journal article" date="2000" name="Nature">
        <title>Genome sequence of the endocellular bacterial symbiont of aphids Buchnera sp. APS.</title>
        <authorList>
            <person name="Shigenobu S."/>
            <person name="Watanabe H."/>
            <person name="Hattori M."/>
            <person name="Sakaki Y."/>
            <person name="Ishikawa H."/>
        </authorList>
    </citation>
    <scope>NUCLEOTIDE SEQUENCE [LARGE SCALE GENOMIC DNA]</scope>
    <source>
        <strain>APS</strain>
    </source>
</reference>
<proteinExistence type="inferred from homology"/>
<evidence type="ECO:0000255" key="1">
    <source>
        <dbReference type="HAMAP-Rule" id="MF_00219"/>
    </source>
</evidence>
<sequence>MSKFVKKIKIIKPDDWHVHLRDNEILNQVIKYTGKFYKRAVIMPNLNSPITSCLKSIAYRNRILKSMHLNYKFKPLMTCYLTNSTSPKELEFGFSKKIFVAAKFYPNGCTTNSKTGIKKISDITPVLECMEKIGMPLLIHGEEINQNIDIYDREAKFIEKTLDPLRKKFPKLKIVLEHITTKESVEYIKNNDVNYLSATITPHHLMLNRNDMFYGGIQPYLYCLPILKKNKHRMALRKAISNGDKHFFLGSDTAPHLHKNKINMLGCAGIFNAPSSLLSYVKVFEEMRALKYLQSFCSENGPKFYNMPINKETITIIKKPCKIIKKINVGRNVIIPFLSGEILNWSIESD</sequence>
<gene>
    <name evidence="1" type="primary">pyrC</name>
    <name type="ordered locus">BU334</name>
</gene>
<dbReference type="EC" id="3.5.2.3" evidence="1"/>
<dbReference type="EMBL" id="BA000003">
    <property type="protein sequence ID" value="BAB13039.1"/>
    <property type="molecule type" value="Genomic_DNA"/>
</dbReference>
<dbReference type="RefSeq" id="NP_240153.1">
    <property type="nucleotide sequence ID" value="NC_002528.1"/>
</dbReference>
<dbReference type="RefSeq" id="WP_010896073.1">
    <property type="nucleotide sequence ID" value="NC_002528.1"/>
</dbReference>
<dbReference type="SMR" id="P57416"/>
<dbReference type="STRING" id="563178.BUAP5A_328"/>
<dbReference type="MEROPS" id="M38.A02"/>
<dbReference type="EnsemblBacteria" id="BAB13039">
    <property type="protein sequence ID" value="BAB13039"/>
    <property type="gene ID" value="BAB13039"/>
</dbReference>
<dbReference type="KEGG" id="buc:BU334"/>
<dbReference type="PATRIC" id="fig|107806.10.peg.345"/>
<dbReference type="eggNOG" id="COG0418">
    <property type="taxonomic scope" value="Bacteria"/>
</dbReference>
<dbReference type="HOGENOM" id="CLU_041558_1_0_6"/>
<dbReference type="UniPathway" id="UPA00070">
    <property type="reaction ID" value="UER00117"/>
</dbReference>
<dbReference type="Proteomes" id="UP000001806">
    <property type="component" value="Chromosome"/>
</dbReference>
<dbReference type="GO" id="GO:0005829">
    <property type="term" value="C:cytosol"/>
    <property type="evidence" value="ECO:0007669"/>
    <property type="project" value="TreeGrafter"/>
</dbReference>
<dbReference type="GO" id="GO:0004151">
    <property type="term" value="F:dihydroorotase activity"/>
    <property type="evidence" value="ECO:0007669"/>
    <property type="project" value="UniProtKB-UniRule"/>
</dbReference>
<dbReference type="GO" id="GO:0008270">
    <property type="term" value="F:zinc ion binding"/>
    <property type="evidence" value="ECO:0007669"/>
    <property type="project" value="UniProtKB-UniRule"/>
</dbReference>
<dbReference type="GO" id="GO:0006207">
    <property type="term" value="P:'de novo' pyrimidine nucleobase biosynthetic process"/>
    <property type="evidence" value="ECO:0007669"/>
    <property type="project" value="TreeGrafter"/>
</dbReference>
<dbReference type="GO" id="GO:0044205">
    <property type="term" value="P:'de novo' UMP biosynthetic process"/>
    <property type="evidence" value="ECO:0007669"/>
    <property type="project" value="UniProtKB-UniRule"/>
</dbReference>
<dbReference type="CDD" id="cd01294">
    <property type="entry name" value="DHOase"/>
    <property type="match status" value="1"/>
</dbReference>
<dbReference type="Gene3D" id="3.20.20.140">
    <property type="entry name" value="Metal-dependent hydrolases"/>
    <property type="match status" value="1"/>
</dbReference>
<dbReference type="HAMAP" id="MF_00219">
    <property type="entry name" value="PyrC_classII"/>
    <property type="match status" value="1"/>
</dbReference>
<dbReference type="InterPro" id="IPR006680">
    <property type="entry name" value="Amidohydro-rel"/>
</dbReference>
<dbReference type="InterPro" id="IPR004721">
    <property type="entry name" value="DHOdimr"/>
</dbReference>
<dbReference type="InterPro" id="IPR002195">
    <property type="entry name" value="Dihydroorotase_CS"/>
</dbReference>
<dbReference type="InterPro" id="IPR032466">
    <property type="entry name" value="Metal_Hydrolase"/>
</dbReference>
<dbReference type="NCBIfam" id="TIGR00856">
    <property type="entry name" value="pyrC_dimer"/>
    <property type="match status" value="1"/>
</dbReference>
<dbReference type="PANTHER" id="PTHR43137">
    <property type="entry name" value="DIHYDROOROTASE"/>
    <property type="match status" value="1"/>
</dbReference>
<dbReference type="PANTHER" id="PTHR43137:SF1">
    <property type="entry name" value="DIHYDROOROTASE"/>
    <property type="match status" value="1"/>
</dbReference>
<dbReference type="Pfam" id="PF01979">
    <property type="entry name" value="Amidohydro_1"/>
    <property type="match status" value="1"/>
</dbReference>
<dbReference type="PIRSF" id="PIRSF001237">
    <property type="entry name" value="DHOdimr"/>
    <property type="match status" value="1"/>
</dbReference>
<dbReference type="SUPFAM" id="SSF51556">
    <property type="entry name" value="Metallo-dependent hydrolases"/>
    <property type="match status" value="1"/>
</dbReference>
<dbReference type="PROSITE" id="PS00482">
    <property type="entry name" value="DIHYDROOROTASE_1"/>
    <property type="match status" value="1"/>
</dbReference>
<dbReference type="PROSITE" id="PS00483">
    <property type="entry name" value="DIHYDROOROTASE_2"/>
    <property type="match status" value="1"/>
</dbReference>
<name>PYRC_BUCAI</name>
<accession>P57416</accession>
<keyword id="KW-0378">Hydrolase</keyword>
<keyword id="KW-0479">Metal-binding</keyword>
<keyword id="KW-0665">Pyrimidine biosynthesis</keyword>
<keyword id="KW-1185">Reference proteome</keyword>
<keyword id="KW-0862">Zinc</keyword>